<gene>
    <name evidence="6" type="primary">hxpA</name>
    <name evidence="10" type="synonym">yfbT</name>
    <name type="ordered locus">b2293</name>
    <name type="ordered locus">JW5376</name>
</gene>
<organism>
    <name type="scientific">Escherichia coli (strain K12)</name>
    <dbReference type="NCBI Taxonomy" id="83333"/>
    <lineage>
        <taxon>Bacteria</taxon>
        <taxon>Pseudomonadati</taxon>
        <taxon>Pseudomonadota</taxon>
        <taxon>Gammaproteobacteria</taxon>
        <taxon>Enterobacterales</taxon>
        <taxon>Enterobacteriaceae</taxon>
        <taxon>Escherichia</taxon>
    </lineage>
</organism>
<sequence length="216" mass="23008">MRCKGFLFDLDGTLVDSLPAVERAWSNWARRHGLAPEEVLAFIHGKQAITSLRHFMAGKSEADIAAEFTRLEHIEATETEGITALPGAIALLSHLNKAGIPWAIVTSGSMPVARARHKIAGLPAPEVFVTAERVKRGKPEPDAYLLGAQLLGLAPQECVVVEDAPAGVLSGLAAGCHVIAVNAPADTPRLNEVDLVLHSLEQITVTKQPNGDVIIQ</sequence>
<evidence type="ECO:0000250" key="1">
    <source>
        <dbReference type="UniProtKB" id="P77247"/>
    </source>
</evidence>
<evidence type="ECO:0000250" key="2">
    <source>
        <dbReference type="UniProtKB" id="Q8CHP8"/>
    </source>
</evidence>
<evidence type="ECO:0000269" key="3">
    <source>
    </source>
</evidence>
<evidence type="ECO:0000269" key="4">
    <source>
    </source>
</evidence>
<evidence type="ECO:0000269" key="5">
    <source>
    </source>
</evidence>
<evidence type="ECO:0000303" key="6">
    <source>
    </source>
</evidence>
<evidence type="ECO:0000305" key="7"/>
<evidence type="ECO:0000305" key="8">
    <source>
    </source>
</evidence>
<evidence type="ECO:0000305" key="9">
    <source>
    </source>
</evidence>
<evidence type="ECO:0000312" key="10">
    <source>
        <dbReference type="EMBL" id="AAC75353.2"/>
    </source>
</evidence>
<dbReference type="EC" id="3.1.3.22" evidence="5"/>
<dbReference type="EC" id="3.1.3.50" evidence="5"/>
<dbReference type="EC" id="3.1.3.23" evidence="4"/>
<dbReference type="EMBL" id="U00096">
    <property type="protein sequence ID" value="AAC75353.2"/>
    <property type="molecule type" value="Genomic_DNA"/>
</dbReference>
<dbReference type="EMBL" id="AP009048">
    <property type="protein sequence ID" value="BAA16129.2"/>
    <property type="molecule type" value="Genomic_DNA"/>
</dbReference>
<dbReference type="PIR" id="C65001">
    <property type="entry name" value="C65001"/>
</dbReference>
<dbReference type="RefSeq" id="NP_416796.2">
    <property type="nucleotide sequence ID" value="NC_000913.3"/>
</dbReference>
<dbReference type="RefSeq" id="WP_001203392.1">
    <property type="nucleotide sequence ID" value="NZ_LN832404.1"/>
</dbReference>
<dbReference type="SMR" id="P77625"/>
<dbReference type="BioGRID" id="4262967">
    <property type="interactions" value="8"/>
</dbReference>
<dbReference type="BioGRID" id="851118">
    <property type="interactions" value="1"/>
</dbReference>
<dbReference type="DIP" id="DIP-11972N"/>
<dbReference type="FunCoup" id="P77625">
    <property type="interactions" value="296"/>
</dbReference>
<dbReference type="IntAct" id="P77625">
    <property type="interactions" value="2"/>
</dbReference>
<dbReference type="STRING" id="511145.b2293"/>
<dbReference type="jPOST" id="P77625"/>
<dbReference type="PaxDb" id="511145-b2293"/>
<dbReference type="EnsemblBacteria" id="AAC75353">
    <property type="protein sequence ID" value="AAC75353"/>
    <property type="gene ID" value="b2293"/>
</dbReference>
<dbReference type="GeneID" id="946777"/>
<dbReference type="KEGG" id="ecj:JW5376"/>
<dbReference type="KEGG" id="eco:b2293"/>
<dbReference type="KEGG" id="ecoc:C3026_12790"/>
<dbReference type="PATRIC" id="fig|511145.12.peg.2387"/>
<dbReference type="EchoBASE" id="EB3857"/>
<dbReference type="eggNOG" id="COG0637">
    <property type="taxonomic scope" value="Bacteria"/>
</dbReference>
<dbReference type="HOGENOM" id="CLU_045011_13_4_6"/>
<dbReference type="InParanoid" id="P77625"/>
<dbReference type="OMA" id="QVHTFDG"/>
<dbReference type="OrthoDB" id="9800058at2"/>
<dbReference type="PhylomeDB" id="P77625"/>
<dbReference type="BioCyc" id="EcoCyc:G7187-MONOMER"/>
<dbReference type="BioCyc" id="MetaCyc:G7187-MONOMER"/>
<dbReference type="PRO" id="PR:P77625"/>
<dbReference type="Proteomes" id="UP000000625">
    <property type="component" value="Chromosome"/>
</dbReference>
<dbReference type="GO" id="GO:0050897">
    <property type="term" value="F:cobalt ion binding"/>
    <property type="evidence" value="ECO:0000314"/>
    <property type="project" value="UniProtKB"/>
</dbReference>
<dbReference type="GO" id="GO:0043136">
    <property type="term" value="F:glycerol-3-phosphatase activity"/>
    <property type="evidence" value="ECO:0000314"/>
    <property type="project" value="EcoCyc"/>
</dbReference>
<dbReference type="GO" id="GO:0000287">
    <property type="term" value="F:magnesium ion binding"/>
    <property type="evidence" value="ECO:0000314"/>
    <property type="project" value="UniProtKB"/>
</dbReference>
<dbReference type="GO" id="GO:0030145">
    <property type="term" value="F:manganese ion binding"/>
    <property type="evidence" value="ECO:0000314"/>
    <property type="project" value="UniProtKB"/>
</dbReference>
<dbReference type="GO" id="GO:0050084">
    <property type="term" value="F:mannitol-1-phosphatase activity"/>
    <property type="evidence" value="ECO:0000314"/>
    <property type="project" value="EcoCyc"/>
</dbReference>
<dbReference type="GO" id="GO:0050286">
    <property type="term" value="F:sorbitol-6-phosphatase activity"/>
    <property type="evidence" value="ECO:0000314"/>
    <property type="project" value="EcoCyc"/>
</dbReference>
<dbReference type="GO" id="GO:0050308">
    <property type="term" value="F:sugar-phosphatase activity"/>
    <property type="evidence" value="ECO:0000314"/>
    <property type="project" value="UniProtKB"/>
</dbReference>
<dbReference type="GO" id="GO:0005975">
    <property type="term" value="P:carbohydrate metabolic process"/>
    <property type="evidence" value="ECO:0000318"/>
    <property type="project" value="GO_Central"/>
</dbReference>
<dbReference type="CDD" id="cd07527">
    <property type="entry name" value="HAD_ScGPP-like"/>
    <property type="match status" value="1"/>
</dbReference>
<dbReference type="FunFam" id="1.10.150.240:FF:000007">
    <property type="entry name" value="Sugar phosphatase YfbT"/>
    <property type="match status" value="1"/>
</dbReference>
<dbReference type="Gene3D" id="3.40.50.1000">
    <property type="entry name" value="HAD superfamily/HAD-like"/>
    <property type="match status" value="1"/>
</dbReference>
<dbReference type="Gene3D" id="1.10.150.240">
    <property type="entry name" value="Putative phosphatase, domain 2"/>
    <property type="match status" value="1"/>
</dbReference>
<dbReference type="InterPro" id="IPR036412">
    <property type="entry name" value="HAD-like_sf"/>
</dbReference>
<dbReference type="InterPro" id="IPR051806">
    <property type="entry name" value="HAD-like_SPP"/>
</dbReference>
<dbReference type="InterPro" id="IPR006439">
    <property type="entry name" value="HAD-SF_hydro_IA"/>
</dbReference>
<dbReference type="InterPro" id="IPR023214">
    <property type="entry name" value="HAD_sf"/>
</dbReference>
<dbReference type="InterPro" id="IPR023198">
    <property type="entry name" value="PGP-like_dom2"/>
</dbReference>
<dbReference type="NCBIfam" id="TIGR01549">
    <property type="entry name" value="HAD-SF-IA-v1"/>
    <property type="match status" value="1"/>
</dbReference>
<dbReference type="NCBIfam" id="TIGR01509">
    <property type="entry name" value="HAD-SF-IA-v3"/>
    <property type="match status" value="1"/>
</dbReference>
<dbReference type="NCBIfam" id="NF008610">
    <property type="entry name" value="PRK11587.1"/>
    <property type="match status" value="1"/>
</dbReference>
<dbReference type="PANTHER" id="PTHR43481">
    <property type="entry name" value="FRUCTOSE-1-PHOSPHATE PHOSPHATASE"/>
    <property type="match status" value="1"/>
</dbReference>
<dbReference type="PANTHER" id="PTHR43481:SF4">
    <property type="entry name" value="GLYCEROL-1-PHOSPHATE PHOSPHOHYDROLASE 1-RELATED"/>
    <property type="match status" value="1"/>
</dbReference>
<dbReference type="Pfam" id="PF00702">
    <property type="entry name" value="Hydrolase"/>
    <property type="match status" value="1"/>
</dbReference>
<dbReference type="PRINTS" id="PR00413">
    <property type="entry name" value="HADHALOGNASE"/>
</dbReference>
<dbReference type="SFLD" id="SFLDG01135">
    <property type="entry name" value="C1.5.6:_HAD__Beta-PGM__Phospha"/>
    <property type="match status" value="1"/>
</dbReference>
<dbReference type="SFLD" id="SFLDG01129">
    <property type="entry name" value="C1.5:_HAD__Beta-PGM__Phosphata"/>
    <property type="match status" value="1"/>
</dbReference>
<dbReference type="SUPFAM" id="SSF56784">
    <property type="entry name" value="HAD-like"/>
    <property type="match status" value="1"/>
</dbReference>
<feature type="chain" id="PRO_0000108059" description="Hexitol phosphatase A">
    <location>
        <begin position="1"/>
        <end position="216"/>
    </location>
</feature>
<feature type="active site" description="Nucleophile" evidence="2">
    <location>
        <position position="9"/>
    </location>
</feature>
<feature type="active site" description="Proton donor" evidence="2">
    <location>
        <position position="11"/>
    </location>
</feature>
<feature type="binding site" evidence="1">
    <location>
        <begin position="9"/>
        <end position="11"/>
    </location>
    <ligand>
        <name>substrate</name>
    </ligand>
</feature>
<feature type="binding site" evidence="1">
    <location>
        <position position="9"/>
    </location>
    <ligand>
        <name>a divalent metal cation</name>
        <dbReference type="ChEBI" id="CHEBI:60240"/>
    </ligand>
</feature>
<feature type="binding site" evidence="1">
    <location>
        <position position="11"/>
    </location>
    <ligand>
        <name>a divalent metal cation</name>
        <dbReference type="ChEBI" id="CHEBI:60240"/>
    </ligand>
</feature>
<feature type="binding site" evidence="1">
    <location>
        <begin position="106"/>
        <end position="107"/>
    </location>
    <ligand>
        <name>substrate</name>
    </ligand>
</feature>
<feature type="binding site" evidence="1">
    <location>
        <position position="138"/>
    </location>
    <ligand>
        <name>substrate</name>
    </ligand>
</feature>
<feature type="binding site" evidence="1">
    <location>
        <position position="163"/>
    </location>
    <ligand>
        <name>a divalent metal cation</name>
        <dbReference type="ChEBI" id="CHEBI:60240"/>
    </ligand>
</feature>
<accession>P77625</accession>
<keyword id="KW-0119">Carbohydrate metabolism</keyword>
<keyword id="KW-0170">Cobalt</keyword>
<keyword id="KW-0378">Hydrolase</keyword>
<keyword id="KW-0460">Magnesium</keyword>
<keyword id="KW-0464">Manganese</keyword>
<keyword id="KW-0479">Metal-binding</keyword>
<keyword id="KW-1185">Reference proteome</keyword>
<protein>
    <recommendedName>
        <fullName evidence="6">Hexitol phosphatase A</fullName>
    </recommendedName>
    <alternativeName>
        <fullName evidence="9">Mannitol-1-phosphatase</fullName>
        <ecNumber evidence="5">3.1.3.22</ecNumber>
    </alternativeName>
    <alternativeName>
        <fullName evidence="9">Sorbitol-6-phosphatase</fullName>
        <ecNumber evidence="5">3.1.3.50</ecNumber>
    </alternativeName>
    <alternativeName>
        <fullName evidence="8">Sugar-phosphatase</fullName>
        <ecNumber evidence="4">3.1.3.23</ecNumber>
    </alternativeName>
</protein>
<name>HXPA_ECOLI</name>
<comment type="function">
    <text evidence="3 4 5">Sugar-phosphate phosphohydrolase that appears to contribute to butanol tolerance (PubMed:27941785). Catalyzes the dephosphorylation of D-mannitol 1-phosphate and D-sorbitol 6-phosphate (PubMed:27941785). Is also able to dephosphorylate other sugar phosphates in vitro including ribose-5-phosphate (Rib5P), 2-deoxyribose-5-phosphate, fructose-1-phosphate (Fru1P), fructose-6-phosphate (Fru6P), and glucose-6-phosphate (Glu6P) (PubMed:16990279). Selectively hydrolyzes beta-D-glucose-1-phosphate (bGlu1P) and has no activity with the alpha form (PubMed:16990279).</text>
</comment>
<comment type="catalytic activity">
    <reaction evidence="4">
        <text>sugar phosphate + H2O = sugar + phosphate.</text>
        <dbReference type="EC" id="3.1.3.23"/>
    </reaction>
</comment>
<comment type="catalytic activity">
    <reaction evidence="5">
        <text>D-mannitol 1-phosphate + H2O = D-mannitol + phosphate</text>
        <dbReference type="Rhea" id="RHEA:19537"/>
        <dbReference type="ChEBI" id="CHEBI:15377"/>
        <dbReference type="ChEBI" id="CHEBI:16899"/>
        <dbReference type="ChEBI" id="CHEBI:43474"/>
        <dbReference type="ChEBI" id="CHEBI:61381"/>
        <dbReference type="EC" id="3.1.3.22"/>
    </reaction>
</comment>
<comment type="catalytic activity">
    <reaction evidence="5">
        <text>D-sorbitol 6-phosphate + H2O = D-sorbitol + phosphate</text>
        <dbReference type="Rhea" id="RHEA:24580"/>
        <dbReference type="ChEBI" id="CHEBI:15377"/>
        <dbReference type="ChEBI" id="CHEBI:17924"/>
        <dbReference type="ChEBI" id="CHEBI:43474"/>
        <dbReference type="ChEBI" id="CHEBI:60084"/>
        <dbReference type="EC" id="3.1.3.50"/>
    </reaction>
</comment>
<comment type="cofactor">
    <cofactor evidence="4">
        <name>Mg(2+)</name>
        <dbReference type="ChEBI" id="CHEBI:18420"/>
    </cofactor>
    <cofactor evidence="4">
        <name>Mn(2+)</name>
        <dbReference type="ChEBI" id="CHEBI:29035"/>
    </cofactor>
    <cofactor evidence="4">
        <name>Co(2+)</name>
        <dbReference type="ChEBI" id="CHEBI:48828"/>
    </cofactor>
    <text evidence="4">Requires the presence of a divalent metal cation for activity. Can use magnesium, manganese or cobalt.</text>
</comment>
<comment type="biophysicochemical properties">
    <kinetics>
        <KM evidence="4">1 mM for fructose-1-P (with magnesium ions as cofactor and at pH 9)</KM>
        <KM evidence="4">1.3 mM for fructose-6-P (with magnesium ions as cofactor and at pH 9)</KM>
        <KM evidence="4">1.8 mM for glucose-6-P (with cobalt ions as cofactor and at pH 9)</KM>
        <KM evidence="4">2.2 mM for ribose-5-P (with magnesium ions as cofactor and at pH 9)</KM>
        <KM evidence="4">7 mM for beta-D-glucose-1-P (with manganese ions as cofactor and at pH 9)</KM>
        <text evidence="4">kcat is 3.7 sec(-1) with fructose-1-P as substrate. kcat is 2.7 sec(-1) with ribose-5-P as substrate. kcat is 13 sec(-1) with glucose-6-P as substrate. kcat is 3.1 sec(-1) with fructose-6-P as substrate. kcat is 7.5 sec(-1) with beta-D-glucose-1-P as substrate.</text>
    </kinetics>
    <phDependence>
        <text evidence="4">Optimum pH is between 6 and 7.5.</text>
    </phDependence>
</comment>
<comment type="disruption phenotype">
    <text evidence="5">Cells lacking this gene show a reduced growth rate at high butanol concentrations compared to wild-type. They also show a consistent change in the level of mannitol, D-sorbitol, galactitol, L-tyrosine, 3-amino-3-(4-hydroxyphenyl)propanoate and N-hydroxy-L-phenylalanine.</text>
</comment>
<comment type="similarity">
    <text evidence="7">Belongs to the HAD-like hydrolase superfamily. CbbY/CbbZ/Gph/YieH family.</text>
</comment>
<proteinExistence type="evidence at protein level"/>
<reference key="1">
    <citation type="journal article" date="1997" name="DNA Res.">
        <title>Construction of a contiguous 874-kb sequence of the Escherichia coli-K12 genome corresponding to 50.0-68.8 min on the linkage map and analysis of its sequence features.</title>
        <authorList>
            <person name="Yamamoto Y."/>
            <person name="Aiba H."/>
            <person name="Baba T."/>
            <person name="Hayashi K."/>
            <person name="Inada T."/>
            <person name="Isono K."/>
            <person name="Itoh T."/>
            <person name="Kimura S."/>
            <person name="Kitagawa M."/>
            <person name="Makino K."/>
            <person name="Miki T."/>
            <person name="Mitsuhashi N."/>
            <person name="Mizobuchi K."/>
            <person name="Mori H."/>
            <person name="Nakade S."/>
            <person name="Nakamura Y."/>
            <person name="Nashimoto H."/>
            <person name="Oshima T."/>
            <person name="Oyama S."/>
            <person name="Saito N."/>
            <person name="Sampei G."/>
            <person name="Satoh Y."/>
            <person name="Sivasundaram S."/>
            <person name="Tagami H."/>
            <person name="Takahashi H."/>
            <person name="Takeda J."/>
            <person name="Takemoto K."/>
            <person name="Uehara K."/>
            <person name="Wada C."/>
            <person name="Yamagata S."/>
            <person name="Horiuchi T."/>
        </authorList>
    </citation>
    <scope>NUCLEOTIDE SEQUENCE [LARGE SCALE GENOMIC DNA]</scope>
    <source>
        <strain>K12 / W3110 / ATCC 27325 / DSM 5911</strain>
    </source>
</reference>
<reference key="2">
    <citation type="journal article" date="1997" name="Science">
        <title>The complete genome sequence of Escherichia coli K-12.</title>
        <authorList>
            <person name="Blattner F.R."/>
            <person name="Plunkett G. III"/>
            <person name="Bloch C.A."/>
            <person name="Perna N.T."/>
            <person name="Burland V."/>
            <person name="Riley M."/>
            <person name="Collado-Vides J."/>
            <person name="Glasner J.D."/>
            <person name="Rode C.K."/>
            <person name="Mayhew G.F."/>
            <person name="Gregor J."/>
            <person name="Davis N.W."/>
            <person name="Kirkpatrick H.A."/>
            <person name="Goeden M.A."/>
            <person name="Rose D.J."/>
            <person name="Mau B."/>
            <person name="Shao Y."/>
        </authorList>
    </citation>
    <scope>NUCLEOTIDE SEQUENCE [LARGE SCALE GENOMIC DNA]</scope>
    <source>
        <strain>K12 / MG1655 / ATCC 47076</strain>
    </source>
</reference>
<reference key="3">
    <citation type="journal article" date="2006" name="Mol. Syst. Biol.">
        <title>Highly accurate genome sequences of Escherichia coli K-12 strains MG1655 and W3110.</title>
        <authorList>
            <person name="Hayashi K."/>
            <person name="Morooka N."/>
            <person name="Yamamoto Y."/>
            <person name="Fujita K."/>
            <person name="Isono K."/>
            <person name="Choi S."/>
            <person name="Ohtsubo E."/>
            <person name="Baba T."/>
            <person name="Wanner B.L."/>
            <person name="Mori H."/>
            <person name="Horiuchi T."/>
        </authorList>
    </citation>
    <scope>NUCLEOTIDE SEQUENCE [LARGE SCALE GENOMIC DNA]</scope>
    <source>
        <strain>K12 / W3110 / ATCC 27325 / DSM 5911</strain>
    </source>
</reference>
<reference key="4">
    <citation type="journal article" date="1999" name="Electrophoresis">
        <title>Enrichment of low abundance proteins of Escherichia coli by hydroxyapatite chromatography.</title>
        <authorList>
            <person name="Fountoulakis M."/>
            <person name="Takacs M.-F."/>
            <person name="Berndt P."/>
            <person name="Langen H."/>
            <person name="Takacs B."/>
        </authorList>
    </citation>
    <scope>IDENTIFICATION BY MASS SPECTROMETRY</scope>
    <source>
        <strain>B / BL21</strain>
    </source>
</reference>
<reference key="5">
    <citation type="journal article" date="2005" name="FEMS Microbiol. Rev.">
        <title>Enzyme genomics: application of general enzymatic screens to discover new enzymes.</title>
        <authorList>
            <person name="Kuznetsova E."/>
            <person name="Proudfoot M."/>
            <person name="Sanders S.A."/>
            <person name="Reinking J."/>
            <person name="Savchenko A."/>
            <person name="Arrowsmith C.H."/>
            <person name="Edwards A.M."/>
            <person name="Yakunin A.F."/>
        </authorList>
    </citation>
    <scope>FUNCTION AS A PHOSPHATASE</scope>
</reference>
<reference key="6">
    <citation type="journal article" date="2006" name="J. Biol. Chem.">
        <title>Genome-wide analysis of substrate specificities of the Escherichia coli haloacid dehalogenase-like phosphatase family.</title>
        <authorList>
            <person name="Kuznetsova E."/>
            <person name="Proudfoot M."/>
            <person name="Gonzalez C.F."/>
            <person name="Brown G."/>
            <person name="Omelchenko M.V."/>
            <person name="Borozan I."/>
            <person name="Carmel L."/>
            <person name="Wolf Y.I."/>
            <person name="Mori H."/>
            <person name="Savchenko A.V."/>
            <person name="Arrowsmith C.H."/>
            <person name="Koonin E.V."/>
            <person name="Edwards A.M."/>
            <person name="Yakunin A.F."/>
        </authorList>
    </citation>
    <scope>FUNCTION AS A SUGAR-PHOSPHATASE</scope>
    <scope>CATALYTIC ACTIVITY</scope>
    <scope>BIOPHYSICOCHEMICAL PROPERTIES</scope>
    <scope>SUBSTRATE SPECIFICITY</scope>
    <scope>COFACTOR</scope>
</reference>
<reference key="7">
    <citation type="journal article" date="2017" name="Nat. Methods">
        <title>Nontargeted in vitro metabolomics for high-throughput identification of novel enzymes in Escherichia coli.</title>
        <authorList>
            <person name="Sevin D.C."/>
            <person name="Fuhrer T."/>
            <person name="Zamboni N."/>
            <person name="Sauer U."/>
        </authorList>
    </citation>
    <scope>FUNCTION</scope>
    <scope>CATALYTIC ACTIVITY</scope>
    <scope>DISRUPTION PHENOTYPE</scope>
    <source>
        <strain>K12</strain>
    </source>
</reference>